<protein>
    <recommendedName>
        <fullName evidence="7">Fusicoccadiene C-8 hydroxylase</fullName>
        <ecNumber evidence="5">1.-.-.-</ecNumber>
    </recommendedName>
    <alternativeName>
        <fullName evidence="7">Brassicicene C biosynthetic gene cluster protein 1</fullName>
    </alternativeName>
    <alternativeName>
        <fullName evidence="7">Cytochrome P450 monooxygenase bsc1</fullName>
    </alternativeName>
</protein>
<gene>
    <name evidence="8" type="primary">bsc1</name>
    <name evidence="7" type="synonym">orf1</name>
</gene>
<proteinExistence type="evidence at protein level"/>
<keyword id="KW-0325">Glycoprotein</keyword>
<keyword id="KW-0349">Heme</keyword>
<keyword id="KW-0408">Iron</keyword>
<keyword id="KW-0472">Membrane</keyword>
<keyword id="KW-0479">Metal-binding</keyword>
<keyword id="KW-0503">Monooxygenase</keyword>
<keyword id="KW-0560">Oxidoreductase</keyword>
<keyword id="KW-0812">Transmembrane</keyword>
<keyword id="KW-1133">Transmembrane helix</keyword>
<comment type="function">
    <text evidence="4 5 6 9">Cytochrome P450 monooxygenase; part of the gene cluster that mediates the biosynthesis of the diterpene glucoside brassicicene C (PubMed:19097780, PubMed:19700326). In the first step of the brassicicene C biosynthesis, the bifunctional diterpene synthase bsc8 that possesses both prenyl transferase and terpene cyclase activity, converts isopentenyl diphosphate and dimethylallyl diphosphate into geranylgeranyl diphosphate (GGDP) that is further converted into fusicocca-2,10(14)-diene, the first precursor for brassicicene C (PubMed:19097780). Fusicocca-2,10(14)-diene is then substrate of cytochrome P450 monooxygenase bsc1 for hydroxylation at the C-8 position (PubMed:19700326). Oxidation at C-16 position to aldehyde is then catalyzed by the cytochrome P450 monooyxygenase bsc7, yielding fusicocca-2,10(14)-diene-8-beta,16-diol (PubMed:19700326). Follows the isomerization of the double bond and reduction of aldehyde to alcohol catalyzed by the short-chain dehydrogenase/reductase bsc3 to yield the diol compound fusicocca-1,10(14)-diene-8 beta,16-diol (Probable). The next step is the oxidation at the C-3 position of fusicocca-2,10(14)-diene-8-beta,16-diol catalyzed by the alpha-ketoglutarate dependent dioxygenase bsc9, to produce a triol compound (PubMed:21299202). Methylation of the hydroxy group at position 16 is performed by the methyltransferase bsc6 (PubMed:19097780). 16-O-methylation is followed by oxidation at the C-13 position to ketone and an alkyl shift of the methyl group leads to brassicicene C (Probable). Although the probable acetyltransferase bsc4 is included in the gene cluster, no acetylation reactions are necessary for brassicicene C biosynthesis. However, the fact that brassicicene E, which is a structurally related compound having an acetoxy group at position 12, was previously isolated from another strain of A.brassicicola suggests that the ATCC 96836 strain might also produce a small amount of brassicicene E (Probable).</text>
</comment>
<comment type="cofactor">
    <cofactor evidence="1">
        <name>heme</name>
        <dbReference type="ChEBI" id="CHEBI:30413"/>
    </cofactor>
</comment>
<comment type="pathway">
    <text evidence="5">Mycotoxin biosynthesis.</text>
</comment>
<comment type="subcellular location">
    <subcellularLocation>
        <location evidence="2">Membrane</location>
        <topology evidence="2">Single-pass membrane protein</topology>
    </subcellularLocation>
</comment>
<comment type="similarity">
    <text evidence="8">Belongs to the cytochrome P450 family.</text>
</comment>
<accession>D1MX85</accession>
<feature type="chain" id="PRO_0000445451" description="Fusicoccadiene C-8 hydroxylase">
    <location>
        <begin position="1"/>
        <end position="527"/>
    </location>
</feature>
<feature type="transmembrane region" description="Helical" evidence="2">
    <location>
        <begin position="15"/>
        <end position="35"/>
    </location>
</feature>
<feature type="binding site" description="axial binding residue" evidence="1">
    <location>
        <position position="465"/>
    </location>
    <ligand>
        <name>heme</name>
        <dbReference type="ChEBI" id="CHEBI:30413"/>
    </ligand>
    <ligandPart>
        <name>Fe</name>
        <dbReference type="ChEBI" id="CHEBI:18248"/>
    </ligandPart>
</feature>
<feature type="glycosylation site" description="N-linked (GlcNAc...) asparagine" evidence="3">
    <location>
        <position position="125"/>
    </location>
</feature>
<feature type="glycosylation site" description="N-linked (GlcNAc...) asparagine" evidence="3">
    <location>
        <position position="496"/>
    </location>
</feature>
<sequence length="527" mass="59821">MEMATTFTHDVTTSGKPLLLFLILITLTYSLGIVFYRLFRHPLAKFPGPRIAAATYLYEIAFDYFGNGAYLFEIERMHHKYGPIVRLNPAELSIKDGEFYDKVYVNGNVRRTEALPSFGDGMDFNNSHGMTVDHHQHRQRRKPLEPFFSKAGVARFESNLASVVSTLVDRLRDYEGTGSVLRLDHAFAALAGDIITTMCIDSTSMTFLDDKDFSRGWYELFHTLIISMPVFMNFPWIIRLVRLIPTSILKRVDPRSQMFRDWSDMSVAEIKKSLQRKATGEMLTYQKGIIKAPTLFDHLVNSDLPTSDMSVERLASEAQVLMGAGTVTTAQSMSHLVVNVLLRPDVEKRLREEFAVLMKQLGEASLPKARELEKLPYLQACVKEGLRLSHGLMHRLPRISPDVALEFNGLIIPPGTPVGMSAYFMHMDETVYENPREFIPERWLGDVDPKMDRNYVPFSRGSRRCLAPNLAYTEISMVMAALFSPWSPAIRLQDTNASDVDPVCAFLLPLPRLDSKGVRVIVRKNKE</sequence>
<organism>
    <name type="scientific">Alternaria brassicicola</name>
    <name type="common">Dark leaf spot agent</name>
    <dbReference type="NCBI Taxonomy" id="29001"/>
    <lineage>
        <taxon>Eukaryota</taxon>
        <taxon>Fungi</taxon>
        <taxon>Dikarya</taxon>
        <taxon>Ascomycota</taxon>
        <taxon>Pezizomycotina</taxon>
        <taxon>Dothideomycetes</taxon>
        <taxon>Pleosporomycetidae</taxon>
        <taxon>Pleosporales</taxon>
        <taxon>Pleosporineae</taxon>
        <taxon>Pleosporaceae</taxon>
        <taxon>Alternaria</taxon>
        <taxon>Alternaria sect. Brassicicola</taxon>
    </lineage>
</organism>
<dbReference type="EC" id="1.-.-.-" evidence="5"/>
<dbReference type="EMBL" id="AB506078">
    <property type="protein sequence ID" value="BAI52800.1"/>
    <property type="molecule type" value="mRNA"/>
</dbReference>
<dbReference type="SMR" id="D1MX85"/>
<dbReference type="GlyCosmos" id="D1MX85">
    <property type="glycosylation" value="2 sites, No reported glycans"/>
</dbReference>
<dbReference type="BioCyc" id="MetaCyc:MONOMER-18718"/>
<dbReference type="GO" id="GO:0016020">
    <property type="term" value="C:membrane"/>
    <property type="evidence" value="ECO:0007669"/>
    <property type="project" value="UniProtKB-SubCell"/>
</dbReference>
<dbReference type="GO" id="GO:0020037">
    <property type="term" value="F:heme binding"/>
    <property type="evidence" value="ECO:0007669"/>
    <property type="project" value="InterPro"/>
</dbReference>
<dbReference type="GO" id="GO:0005506">
    <property type="term" value="F:iron ion binding"/>
    <property type="evidence" value="ECO:0007669"/>
    <property type="project" value="InterPro"/>
</dbReference>
<dbReference type="GO" id="GO:0004497">
    <property type="term" value="F:monooxygenase activity"/>
    <property type="evidence" value="ECO:0007669"/>
    <property type="project" value="UniProtKB-KW"/>
</dbReference>
<dbReference type="GO" id="GO:0016705">
    <property type="term" value="F:oxidoreductase activity, acting on paired donors, with incorporation or reduction of molecular oxygen"/>
    <property type="evidence" value="ECO:0007669"/>
    <property type="project" value="InterPro"/>
</dbReference>
<dbReference type="CDD" id="cd11062">
    <property type="entry name" value="CYP58-like"/>
    <property type="match status" value="1"/>
</dbReference>
<dbReference type="Gene3D" id="1.10.630.10">
    <property type="entry name" value="Cytochrome P450"/>
    <property type="match status" value="1"/>
</dbReference>
<dbReference type="InterPro" id="IPR001128">
    <property type="entry name" value="Cyt_P450"/>
</dbReference>
<dbReference type="InterPro" id="IPR017972">
    <property type="entry name" value="Cyt_P450_CS"/>
</dbReference>
<dbReference type="InterPro" id="IPR002401">
    <property type="entry name" value="Cyt_P450_E_grp-I"/>
</dbReference>
<dbReference type="InterPro" id="IPR036396">
    <property type="entry name" value="Cyt_P450_sf"/>
</dbReference>
<dbReference type="InterPro" id="IPR050121">
    <property type="entry name" value="Cytochrome_P450_monoxygenase"/>
</dbReference>
<dbReference type="PANTHER" id="PTHR24305">
    <property type="entry name" value="CYTOCHROME P450"/>
    <property type="match status" value="1"/>
</dbReference>
<dbReference type="PANTHER" id="PTHR24305:SF157">
    <property type="entry name" value="N-ACETYLTRYPTOPHAN 6-HYDROXYLASE IVOC-RELATED"/>
    <property type="match status" value="1"/>
</dbReference>
<dbReference type="Pfam" id="PF00067">
    <property type="entry name" value="p450"/>
    <property type="match status" value="1"/>
</dbReference>
<dbReference type="PRINTS" id="PR00463">
    <property type="entry name" value="EP450I"/>
</dbReference>
<dbReference type="PRINTS" id="PR00385">
    <property type="entry name" value="P450"/>
</dbReference>
<dbReference type="SUPFAM" id="SSF48264">
    <property type="entry name" value="Cytochrome P450"/>
    <property type="match status" value="1"/>
</dbReference>
<dbReference type="PROSITE" id="PS00086">
    <property type="entry name" value="CYTOCHROME_P450"/>
    <property type="match status" value="1"/>
</dbReference>
<name>BSC1_ALTBR</name>
<reference key="1">
    <citation type="journal article" date="2009" name="Bioorg. Med. Chem. Lett.">
        <title>Functional analyses of cytochrome P450 genes responsible for the early steps of brassicicene C biosynthesis.</title>
        <authorList>
            <person name="Hashimoto M."/>
            <person name="Higuchi Y."/>
            <person name="Takahashi S."/>
            <person name="Osada H."/>
            <person name="Sakaki T."/>
            <person name="Toyomasu T."/>
            <person name="Sassa T."/>
            <person name="Kato N."/>
            <person name="Dairi T."/>
        </authorList>
    </citation>
    <scope>NUCLEOTIDE SEQUENCE [MRNA]</scope>
    <scope>FUNCTION</scope>
    <scope>CATALYTIC ACTIVITY</scope>
    <scope>PATHWAY</scope>
    <source>
        <strain>ATCC 96836</strain>
    </source>
</reference>
<reference key="2">
    <citation type="journal article" date="2009" name="Bioorg. Med. Chem. Lett.">
        <title>Identification and functional analysis of brassicicene C biosynthetic gene cluster in Alternaria brassicicola.</title>
        <authorList>
            <person name="Minami A."/>
            <person name="Tajima N."/>
            <person name="Higuchi Y."/>
            <person name="Toyomasu T."/>
            <person name="Sassa T."/>
            <person name="Kato N."/>
            <person name="Dairi T."/>
        </authorList>
    </citation>
    <scope>FUNCTION</scope>
</reference>
<reference key="3">
    <citation type="journal article" date="2011" name="J. Am. Chem. Soc.">
        <title>Dioxygenases, key enzymes to determine the aglycon structures of fusicoccin and brassicicene, diterpene compounds produced by fungi.</title>
        <authorList>
            <person name="Ono Y."/>
            <person name="Minami A."/>
            <person name="Noike M."/>
            <person name="Higuchi Y."/>
            <person name="Toyomasu T."/>
            <person name="Sassa T."/>
            <person name="Kato N."/>
            <person name="Dairi T."/>
        </authorList>
    </citation>
    <scope>FUNCTION</scope>
</reference>
<evidence type="ECO:0000250" key="1">
    <source>
        <dbReference type="UniProtKB" id="P04798"/>
    </source>
</evidence>
<evidence type="ECO:0000255" key="2"/>
<evidence type="ECO:0000255" key="3">
    <source>
        <dbReference type="PROSITE-ProRule" id="PRU00498"/>
    </source>
</evidence>
<evidence type="ECO:0000269" key="4">
    <source>
    </source>
</evidence>
<evidence type="ECO:0000269" key="5">
    <source>
    </source>
</evidence>
<evidence type="ECO:0000269" key="6">
    <source>
    </source>
</evidence>
<evidence type="ECO:0000303" key="7">
    <source>
    </source>
</evidence>
<evidence type="ECO:0000305" key="8"/>
<evidence type="ECO:0000305" key="9">
    <source>
    </source>
</evidence>